<protein>
    <recommendedName>
        <fullName evidence="1">DNA-directed RNA polymerase subunit alpha</fullName>
        <shortName evidence="1">RNAP subunit alpha</shortName>
        <ecNumber evidence="1">2.7.7.6</ecNumber>
    </recommendedName>
    <alternativeName>
        <fullName evidence="1">RNA polymerase subunit alpha</fullName>
    </alternativeName>
    <alternativeName>
        <fullName evidence="1">Transcriptase subunit alpha</fullName>
    </alternativeName>
</protein>
<comment type="function">
    <text evidence="1">DNA-dependent RNA polymerase catalyzes the transcription of DNA into RNA using the four ribonucleoside triphosphates as substrates.</text>
</comment>
<comment type="catalytic activity">
    <reaction evidence="1">
        <text>RNA(n) + a ribonucleoside 5'-triphosphate = RNA(n+1) + diphosphate</text>
        <dbReference type="Rhea" id="RHEA:21248"/>
        <dbReference type="Rhea" id="RHEA-COMP:14527"/>
        <dbReference type="Rhea" id="RHEA-COMP:17342"/>
        <dbReference type="ChEBI" id="CHEBI:33019"/>
        <dbReference type="ChEBI" id="CHEBI:61557"/>
        <dbReference type="ChEBI" id="CHEBI:140395"/>
        <dbReference type="EC" id="2.7.7.6"/>
    </reaction>
</comment>
<comment type="subunit">
    <text evidence="1">Homodimer. The RNAP catalytic core consists of 2 alpha, 1 beta, 1 beta' and 1 omega subunit. When a sigma factor is associated with the core the holoenzyme is formed, which can initiate transcription.</text>
</comment>
<comment type="domain">
    <text evidence="1">The N-terminal domain is essential for RNAP assembly and basal transcription, whereas the C-terminal domain is involved in interaction with transcriptional regulators and with upstream promoter elements.</text>
</comment>
<comment type="similarity">
    <text evidence="1">Belongs to the RNA polymerase alpha chain family.</text>
</comment>
<accession>A5FZU1</accession>
<gene>
    <name evidence="1" type="primary">rpoA</name>
    <name type="ordered locus">Acry_1922</name>
</gene>
<name>RPOA_ACICJ</name>
<keyword id="KW-0240">DNA-directed RNA polymerase</keyword>
<keyword id="KW-0548">Nucleotidyltransferase</keyword>
<keyword id="KW-1185">Reference proteome</keyword>
<keyword id="KW-0804">Transcription</keyword>
<keyword id="KW-0808">Transferase</keyword>
<proteinExistence type="inferred from homology"/>
<evidence type="ECO:0000255" key="1">
    <source>
        <dbReference type="HAMAP-Rule" id="MF_00059"/>
    </source>
</evidence>
<feature type="chain" id="PRO_0000323612" description="DNA-directed RNA polymerase subunit alpha">
    <location>
        <begin position="1"/>
        <end position="345"/>
    </location>
</feature>
<feature type="region of interest" description="Alpha N-terminal domain (alpha-NTD)" evidence="1">
    <location>
        <begin position="1"/>
        <end position="241"/>
    </location>
</feature>
<feature type="region of interest" description="Alpha C-terminal domain (alpha-CTD)" evidence="1">
    <location>
        <begin position="257"/>
        <end position="345"/>
    </location>
</feature>
<organism>
    <name type="scientific">Acidiphilium cryptum (strain JF-5)</name>
    <dbReference type="NCBI Taxonomy" id="349163"/>
    <lineage>
        <taxon>Bacteria</taxon>
        <taxon>Pseudomonadati</taxon>
        <taxon>Pseudomonadota</taxon>
        <taxon>Alphaproteobacteria</taxon>
        <taxon>Acetobacterales</taxon>
        <taxon>Acidocellaceae</taxon>
        <taxon>Acidiphilium</taxon>
    </lineage>
</organism>
<sequence>MLRDTHLALQRNWQSLRKPEKLDIEPGADDTRVATIIAEPLERGFGLTLGNALRRVLLSSLHGAAVTSVRIDGVLHEFSSIAGVREDVTDIVLNIKQIAVRMHGDGPKRMTVSATGPCEVTAGMIQTGHDIEVMNPELVICTLDDGATLGMEFTVESGRGYVPAAANRPEDAPIGLIPVDSIYSPVRRVSYRVEPTRVGQVTDYDRLILNIETNGAVTPEDAVALAARILQDQLGMFINFEEPQRLRAEEPRPELPFNPNLLRKVDELELSVRSANCLKNDNIVYIGDLVQKSEQEMLRTPNFGRKSLNEIKEVLSAMGLGLGMVVQDWPPENIEELVKRSDNPF</sequence>
<dbReference type="EC" id="2.7.7.6" evidence="1"/>
<dbReference type="EMBL" id="CP000697">
    <property type="protein sequence ID" value="ABQ31123.1"/>
    <property type="molecule type" value="Genomic_DNA"/>
</dbReference>
<dbReference type="SMR" id="A5FZU1"/>
<dbReference type="STRING" id="349163.Acry_1922"/>
<dbReference type="KEGG" id="acr:Acry_1922"/>
<dbReference type="eggNOG" id="COG0202">
    <property type="taxonomic scope" value="Bacteria"/>
</dbReference>
<dbReference type="HOGENOM" id="CLU_053084_0_0_5"/>
<dbReference type="Proteomes" id="UP000000245">
    <property type="component" value="Chromosome"/>
</dbReference>
<dbReference type="GO" id="GO:0005737">
    <property type="term" value="C:cytoplasm"/>
    <property type="evidence" value="ECO:0007669"/>
    <property type="project" value="UniProtKB-ARBA"/>
</dbReference>
<dbReference type="GO" id="GO:0000428">
    <property type="term" value="C:DNA-directed RNA polymerase complex"/>
    <property type="evidence" value="ECO:0007669"/>
    <property type="project" value="UniProtKB-KW"/>
</dbReference>
<dbReference type="GO" id="GO:0003677">
    <property type="term" value="F:DNA binding"/>
    <property type="evidence" value="ECO:0007669"/>
    <property type="project" value="UniProtKB-UniRule"/>
</dbReference>
<dbReference type="GO" id="GO:0003899">
    <property type="term" value="F:DNA-directed RNA polymerase activity"/>
    <property type="evidence" value="ECO:0007669"/>
    <property type="project" value="UniProtKB-UniRule"/>
</dbReference>
<dbReference type="GO" id="GO:0046983">
    <property type="term" value="F:protein dimerization activity"/>
    <property type="evidence" value="ECO:0007669"/>
    <property type="project" value="InterPro"/>
</dbReference>
<dbReference type="GO" id="GO:0006351">
    <property type="term" value="P:DNA-templated transcription"/>
    <property type="evidence" value="ECO:0007669"/>
    <property type="project" value="UniProtKB-UniRule"/>
</dbReference>
<dbReference type="CDD" id="cd06928">
    <property type="entry name" value="RNAP_alpha_NTD"/>
    <property type="match status" value="1"/>
</dbReference>
<dbReference type="FunFam" id="1.10.150.20:FF:000001">
    <property type="entry name" value="DNA-directed RNA polymerase subunit alpha"/>
    <property type="match status" value="1"/>
</dbReference>
<dbReference type="FunFam" id="2.170.120.12:FF:000001">
    <property type="entry name" value="DNA-directed RNA polymerase subunit alpha"/>
    <property type="match status" value="1"/>
</dbReference>
<dbReference type="Gene3D" id="1.10.150.20">
    <property type="entry name" value="5' to 3' exonuclease, C-terminal subdomain"/>
    <property type="match status" value="1"/>
</dbReference>
<dbReference type="Gene3D" id="2.170.120.12">
    <property type="entry name" value="DNA-directed RNA polymerase, insert domain"/>
    <property type="match status" value="1"/>
</dbReference>
<dbReference type="Gene3D" id="3.30.1360.10">
    <property type="entry name" value="RNA polymerase, RBP11-like subunit"/>
    <property type="match status" value="1"/>
</dbReference>
<dbReference type="HAMAP" id="MF_00059">
    <property type="entry name" value="RNApol_bact_RpoA"/>
    <property type="match status" value="1"/>
</dbReference>
<dbReference type="InterPro" id="IPR011262">
    <property type="entry name" value="DNA-dir_RNA_pol_insert"/>
</dbReference>
<dbReference type="InterPro" id="IPR011263">
    <property type="entry name" value="DNA-dir_RNA_pol_RpoA/D/Rpb3"/>
</dbReference>
<dbReference type="InterPro" id="IPR011773">
    <property type="entry name" value="DNA-dir_RpoA"/>
</dbReference>
<dbReference type="InterPro" id="IPR036603">
    <property type="entry name" value="RBP11-like"/>
</dbReference>
<dbReference type="InterPro" id="IPR011260">
    <property type="entry name" value="RNAP_asu_C"/>
</dbReference>
<dbReference type="InterPro" id="IPR036643">
    <property type="entry name" value="RNApol_insert_sf"/>
</dbReference>
<dbReference type="NCBIfam" id="NF003513">
    <property type="entry name" value="PRK05182.1-2"/>
    <property type="match status" value="1"/>
</dbReference>
<dbReference type="NCBIfam" id="NF003519">
    <property type="entry name" value="PRK05182.2-5"/>
    <property type="match status" value="1"/>
</dbReference>
<dbReference type="NCBIfam" id="TIGR02027">
    <property type="entry name" value="rpoA"/>
    <property type="match status" value="1"/>
</dbReference>
<dbReference type="Pfam" id="PF01000">
    <property type="entry name" value="RNA_pol_A_bac"/>
    <property type="match status" value="1"/>
</dbReference>
<dbReference type="Pfam" id="PF03118">
    <property type="entry name" value="RNA_pol_A_CTD"/>
    <property type="match status" value="1"/>
</dbReference>
<dbReference type="Pfam" id="PF01193">
    <property type="entry name" value="RNA_pol_L"/>
    <property type="match status" value="1"/>
</dbReference>
<dbReference type="SMART" id="SM00662">
    <property type="entry name" value="RPOLD"/>
    <property type="match status" value="1"/>
</dbReference>
<dbReference type="SUPFAM" id="SSF47789">
    <property type="entry name" value="C-terminal domain of RNA polymerase alpha subunit"/>
    <property type="match status" value="1"/>
</dbReference>
<dbReference type="SUPFAM" id="SSF56553">
    <property type="entry name" value="Insert subdomain of RNA polymerase alpha subunit"/>
    <property type="match status" value="1"/>
</dbReference>
<dbReference type="SUPFAM" id="SSF55257">
    <property type="entry name" value="RBP11-like subunits of RNA polymerase"/>
    <property type="match status" value="1"/>
</dbReference>
<reference key="1">
    <citation type="submission" date="2007-05" db="EMBL/GenBank/DDBJ databases">
        <title>Complete sequence of chromosome of Acidiphilium cryptum JF-5.</title>
        <authorList>
            <consortium name="US DOE Joint Genome Institute"/>
            <person name="Copeland A."/>
            <person name="Lucas S."/>
            <person name="Lapidus A."/>
            <person name="Barry K."/>
            <person name="Detter J.C."/>
            <person name="Glavina del Rio T."/>
            <person name="Hammon N."/>
            <person name="Israni S."/>
            <person name="Dalin E."/>
            <person name="Tice H."/>
            <person name="Pitluck S."/>
            <person name="Sims D."/>
            <person name="Brettin T."/>
            <person name="Bruce D."/>
            <person name="Han C."/>
            <person name="Schmutz J."/>
            <person name="Larimer F."/>
            <person name="Land M."/>
            <person name="Hauser L."/>
            <person name="Kyrpides N."/>
            <person name="Kim E."/>
            <person name="Magnuson T."/>
            <person name="Richardson P."/>
        </authorList>
    </citation>
    <scope>NUCLEOTIDE SEQUENCE [LARGE SCALE GENOMIC DNA]</scope>
    <source>
        <strain>JF-5</strain>
    </source>
</reference>